<comment type="function">
    <text evidence="1">Catalyzes the methyl esterification of L-isoaspartyl residues in peptides and proteins that result from spontaneous decomposition of normal L-aspartyl and L-asparaginyl residues. It plays a role in the repair and/or degradation of damaged proteins.</text>
</comment>
<comment type="catalytic activity">
    <reaction evidence="1">
        <text>[protein]-L-isoaspartate + S-adenosyl-L-methionine = [protein]-L-isoaspartate alpha-methyl ester + S-adenosyl-L-homocysteine</text>
        <dbReference type="Rhea" id="RHEA:12705"/>
        <dbReference type="Rhea" id="RHEA-COMP:12143"/>
        <dbReference type="Rhea" id="RHEA-COMP:12144"/>
        <dbReference type="ChEBI" id="CHEBI:57856"/>
        <dbReference type="ChEBI" id="CHEBI:59789"/>
        <dbReference type="ChEBI" id="CHEBI:90596"/>
        <dbReference type="ChEBI" id="CHEBI:90598"/>
        <dbReference type="EC" id="2.1.1.77"/>
    </reaction>
</comment>
<comment type="subcellular location">
    <subcellularLocation>
        <location evidence="1">Cytoplasm</location>
    </subcellularLocation>
</comment>
<comment type="similarity">
    <text evidence="1">Belongs to the methyltransferase superfamily. L-isoaspartyl/D-aspartyl protein methyltransferase family.</text>
</comment>
<accession>A2S291</accession>
<proteinExistence type="inferred from homology"/>
<dbReference type="EC" id="2.1.1.77" evidence="1"/>
<dbReference type="EMBL" id="CP000546">
    <property type="protein sequence ID" value="ABN03328.1"/>
    <property type="molecule type" value="Genomic_DNA"/>
</dbReference>
<dbReference type="RefSeq" id="WP_011203980.1">
    <property type="nucleotide sequence ID" value="NC_008836.1"/>
</dbReference>
<dbReference type="SMR" id="A2S291"/>
<dbReference type="KEGG" id="bml:BMA10229_A0051"/>
<dbReference type="HOGENOM" id="CLU_055432_1_0_4"/>
<dbReference type="Proteomes" id="UP000002283">
    <property type="component" value="Chromosome I"/>
</dbReference>
<dbReference type="GO" id="GO:0005737">
    <property type="term" value="C:cytoplasm"/>
    <property type="evidence" value="ECO:0007669"/>
    <property type="project" value="UniProtKB-SubCell"/>
</dbReference>
<dbReference type="GO" id="GO:0004719">
    <property type="term" value="F:protein-L-isoaspartate (D-aspartate) O-methyltransferase activity"/>
    <property type="evidence" value="ECO:0007669"/>
    <property type="project" value="UniProtKB-UniRule"/>
</dbReference>
<dbReference type="GO" id="GO:0032259">
    <property type="term" value="P:methylation"/>
    <property type="evidence" value="ECO:0007669"/>
    <property type="project" value="UniProtKB-KW"/>
</dbReference>
<dbReference type="GO" id="GO:0036211">
    <property type="term" value="P:protein modification process"/>
    <property type="evidence" value="ECO:0007669"/>
    <property type="project" value="UniProtKB-UniRule"/>
</dbReference>
<dbReference type="GO" id="GO:0030091">
    <property type="term" value="P:protein repair"/>
    <property type="evidence" value="ECO:0007669"/>
    <property type="project" value="UniProtKB-UniRule"/>
</dbReference>
<dbReference type="CDD" id="cd02440">
    <property type="entry name" value="AdoMet_MTases"/>
    <property type="match status" value="1"/>
</dbReference>
<dbReference type="FunFam" id="3.40.50.150:FF:000010">
    <property type="entry name" value="Protein-L-isoaspartate O-methyltransferase"/>
    <property type="match status" value="1"/>
</dbReference>
<dbReference type="Gene3D" id="3.40.50.150">
    <property type="entry name" value="Vaccinia Virus protein VP39"/>
    <property type="match status" value="1"/>
</dbReference>
<dbReference type="HAMAP" id="MF_00090">
    <property type="entry name" value="PIMT"/>
    <property type="match status" value="1"/>
</dbReference>
<dbReference type="InterPro" id="IPR000682">
    <property type="entry name" value="PCMT"/>
</dbReference>
<dbReference type="InterPro" id="IPR029063">
    <property type="entry name" value="SAM-dependent_MTases_sf"/>
</dbReference>
<dbReference type="NCBIfam" id="TIGR00080">
    <property type="entry name" value="pimt"/>
    <property type="match status" value="1"/>
</dbReference>
<dbReference type="NCBIfam" id="NF001453">
    <property type="entry name" value="PRK00312.1"/>
    <property type="match status" value="1"/>
</dbReference>
<dbReference type="PANTHER" id="PTHR11579">
    <property type="entry name" value="PROTEIN-L-ISOASPARTATE O-METHYLTRANSFERASE"/>
    <property type="match status" value="1"/>
</dbReference>
<dbReference type="PANTHER" id="PTHR11579:SF0">
    <property type="entry name" value="PROTEIN-L-ISOASPARTATE(D-ASPARTATE) O-METHYLTRANSFERASE"/>
    <property type="match status" value="1"/>
</dbReference>
<dbReference type="Pfam" id="PF01135">
    <property type="entry name" value="PCMT"/>
    <property type="match status" value="1"/>
</dbReference>
<dbReference type="SUPFAM" id="SSF53335">
    <property type="entry name" value="S-adenosyl-L-methionine-dependent methyltransferases"/>
    <property type="match status" value="1"/>
</dbReference>
<dbReference type="PROSITE" id="PS01279">
    <property type="entry name" value="PCMT"/>
    <property type="match status" value="1"/>
</dbReference>
<keyword id="KW-0963">Cytoplasm</keyword>
<keyword id="KW-0489">Methyltransferase</keyword>
<keyword id="KW-0949">S-adenosyl-L-methionine</keyword>
<keyword id="KW-0808">Transferase</keyword>
<reference key="1">
    <citation type="journal article" date="2010" name="Genome Biol. Evol.">
        <title>Continuing evolution of Burkholderia mallei through genome reduction and large-scale rearrangements.</title>
        <authorList>
            <person name="Losada L."/>
            <person name="Ronning C.M."/>
            <person name="DeShazer D."/>
            <person name="Woods D."/>
            <person name="Fedorova N."/>
            <person name="Kim H.S."/>
            <person name="Shabalina S.A."/>
            <person name="Pearson T.R."/>
            <person name="Brinkac L."/>
            <person name="Tan P."/>
            <person name="Nandi T."/>
            <person name="Crabtree J."/>
            <person name="Badger J."/>
            <person name="Beckstrom-Sternberg S."/>
            <person name="Saqib M."/>
            <person name="Schutzer S.E."/>
            <person name="Keim P."/>
            <person name="Nierman W.C."/>
        </authorList>
    </citation>
    <scope>NUCLEOTIDE SEQUENCE [LARGE SCALE GENOMIC DNA]</scope>
    <source>
        <strain>NCTC 10229</strain>
    </source>
</reference>
<name>PIMT_BURM9</name>
<evidence type="ECO:0000255" key="1">
    <source>
        <dbReference type="HAMAP-Rule" id="MF_00090"/>
    </source>
</evidence>
<evidence type="ECO:0000256" key="2">
    <source>
        <dbReference type="SAM" id="MobiDB-lite"/>
    </source>
</evidence>
<feature type="chain" id="PRO_0000351830" description="Protein-L-isoaspartate O-methyltransferase">
    <location>
        <begin position="1"/>
        <end position="322"/>
    </location>
</feature>
<feature type="region of interest" description="Disordered" evidence="2">
    <location>
        <begin position="1"/>
        <end position="101"/>
    </location>
</feature>
<feature type="compositionally biased region" description="Basic and acidic residues" evidence="2">
    <location>
        <begin position="14"/>
        <end position="29"/>
    </location>
</feature>
<feature type="compositionally biased region" description="Low complexity" evidence="2">
    <location>
        <begin position="33"/>
        <end position="51"/>
    </location>
</feature>
<feature type="compositionally biased region" description="Low complexity" evidence="2">
    <location>
        <begin position="76"/>
        <end position="91"/>
    </location>
</feature>
<feature type="active site" evidence="1">
    <location>
        <position position="170"/>
    </location>
</feature>
<organism>
    <name type="scientific">Burkholderia mallei (strain NCTC 10229)</name>
    <dbReference type="NCBI Taxonomy" id="412022"/>
    <lineage>
        <taxon>Bacteria</taxon>
        <taxon>Pseudomonadati</taxon>
        <taxon>Pseudomonadota</taxon>
        <taxon>Betaproteobacteria</taxon>
        <taxon>Burkholderiales</taxon>
        <taxon>Burkholderiaceae</taxon>
        <taxon>Burkholderia</taxon>
        <taxon>pseudomallei group</taxon>
    </lineage>
</organism>
<gene>
    <name evidence="1" type="primary">pcm</name>
    <name type="ordered locus">BMA10229_A0051</name>
</gene>
<sequence>MSGERAKRFPLALEDLKREPRKPEGRVAERQAAGDAARQRLTAAAAVPAAASPIVPERRAPHGGVFAAKPARAKQHAPAAPGAAKRAPQGGAKQGDRSAAPNVALSGALALTSERVRERMVERLRANGVADPRVLAAMSAVPRHMFVDPGLAAQAYEDAALPIGHQQTISKPSVVARMIELAAAGRALERVLEIGTGCGYQAAVLSRVARDVYSIERVRPLYERAKLNLRPLRVPNIRLHYGDGRVGLPAAAPFDAIVIAAAGLDVPRALLEQLAIGGRLVAPVGEQAGEQVLTLVERVAPAQWRESRLDRVFFVPLKSGVI</sequence>
<protein>
    <recommendedName>
        <fullName evidence="1">Protein-L-isoaspartate O-methyltransferase</fullName>
        <ecNumber evidence="1">2.1.1.77</ecNumber>
    </recommendedName>
    <alternativeName>
        <fullName evidence="1">L-isoaspartyl protein carboxyl methyltransferase</fullName>
    </alternativeName>
    <alternativeName>
        <fullName evidence="1">Protein L-isoaspartyl methyltransferase</fullName>
    </alternativeName>
    <alternativeName>
        <fullName evidence="1">Protein-beta-aspartate methyltransferase</fullName>
        <shortName evidence="1">PIMT</shortName>
    </alternativeName>
</protein>